<feature type="chain" id="PRO_0000153052" description="Nitrogenase molybdenum-iron protein alpha chain">
    <location>
        <begin position="1"/>
        <end position="489"/>
    </location>
</feature>
<feature type="region of interest" description="Disordered" evidence="2">
    <location>
        <begin position="21"/>
        <end position="44"/>
    </location>
</feature>
<feature type="binding site" evidence="1">
    <location>
        <position position="59"/>
    </location>
    <ligand>
        <name>[8Fe-7S] cluster</name>
        <dbReference type="ChEBI" id="CHEBI:21143"/>
        <note>ligand shared with beta chain</note>
    </ligand>
</feature>
<feature type="binding site" evidence="1">
    <location>
        <position position="85"/>
    </location>
    <ligand>
        <name>[8Fe-7S] cluster</name>
        <dbReference type="ChEBI" id="CHEBI:21143"/>
        <note>ligand shared with beta chain</note>
    </ligand>
</feature>
<feature type="binding site" evidence="1">
    <location>
        <position position="151"/>
    </location>
    <ligand>
        <name>[8Fe-7S] cluster</name>
        <dbReference type="ChEBI" id="CHEBI:21143"/>
        <note>ligand shared with beta chain</note>
    </ligand>
</feature>
<feature type="binding site" evidence="1">
    <location>
        <position position="272"/>
    </location>
    <ligand>
        <name>[7Fe-Mo-9S-C-homocitryl] cluster</name>
        <dbReference type="ChEBI" id="CHEBI:30409"/>
    </ligand>
</feature>
<feature type="binding site" evidence="1">
    <location>
        <position position="439"/>
    </location>
    <ligand>
        <name>[7Fe-Mo-9S-C-homocitryl] cluster</name>
        <dbReference type="ChEBI" id="CHEBI:30409"/>
    </ligand>
</feature>
<organism>
    <name type="scientific">Alcaligenes faecalis</name>
    <dbReference type="NCBI Taxonomy" id="511"/>
    <lineage>
        <taxon>Bacteria</taxon>
        <taxon>Pseudomonadati</taxon>
        <taxon>Pseudomonadota</taxon>
        <taxon>Betaproteobacteria</taxon>
        <taxon>Burkholderiales</taxon>
        <taxon>Alcaligenaceae</taxon>
        <taxon>Alcaligenes</taxon>
    </lineage>
</organism>
<dbReference type="EC" id="1.18.6.1"/>
<dbReference type="EMBL" id="X95565">
    <property type="protein sequence ID" value="CAA64811.1"/>
    <property type="molecule type" value="Genomic_DNA"/>
</dbReference>
<dbReference type="SMR" id="Q44045"/>
<dbReference type="GO" id="GO:0016612">
    <property type="term" value="C:molybdenum-iron nitrogenase complex"/>
    <property type="evidence" value="ECO:0007669"/>
    <property type="project" value="InterPro"/>
</dbReference>
<dbReference type="GO" id="GO:0005524">
    <property type="term" value="F:ATP binding"/>
    <property type="evidence" value="ECO:0007669"/>
    <property type="project" value="UniProtKB-KW"/>
</dbReference>
<dbReference type="GO" id="GO:0051536">
    <property type="term" value="F:iron-sulfur cluster binding"/>
    <property type="evidence" value="ECO:0007669"/>
    <property type="project" value="UniProtKB-KW"/>
</dbReference>
<dbReference type="GO" id="GO:0046872">
    <property type="term" value="F:metal ion binding"/>
    <property type="evidence" value="ECO:0007669"/>
    <property type="project" value="UniProtKB-KW"/>
</dbReference>
<dbReference type="GO" id="GO:0016163">
    <property type="term" value="F:nitrogenase activity"/>
    <property type="evidence" value="ECO:0007669"/>
    <property type="project" value="UniProtKB-EC"/>
</dbReference>
<dbReference type="GO" id="GO:0009399">
    <property type="term" value="P:nitrogen fixation"/>
    <property type="evidence" value="ECO:0007669"/>
    <property type="project" value="UniProtKB-KW"/>
</dbReference>
<dbReference type="CDD" id="cd01976">
    <property type="entry name" value="Nitrogenase_MoFe_alpha"/>
    <property type="match status" value="1"/>
</dbReference>
<dbReference type="Gene3D" id="3.40.50.1980">
    <property type="entry name" value="Nitrogenase molybdenum iron protein domain"/>
    <property type="match status" value="3"/>
</dbReference>
<dbReference type="InterPro" id="IPR000510">
    <property type="entry name" value="Nase/OxRdtase_comp1"/>
</dbReference>
<dbReference type="InterPro" id="IPR010143">
    <property type="entry name" value="Nase_comp1_asu"/>
</dbReference>
<dbReference type="InterPro" id="IPR000318">
    <property type="entry name" value="Nase_comp1_CS"/>
</dbReference>
<dbReference type="InterPro" id="IPR005972">
    <property type="entry name" value="Nase_Mo-Fe_asu"/>
</dbReference>
<dbReference type="NCBIfam" id="TIGR01862">
    <property type="entry name" value="N2-ase-Ialpha"/>
    <property type="match status" value="1"/>
</dbReference>
<dbReference type="NCBIfam" id="TIGR01282">
    <property type="entry name" value="nifD"/>
    <property type="match status" value="1"/>
</dbReference>
<dbReference type="PANTHER" id="PTHR43457">
    <property type="entry name" value="NITROGENASE MOLYBDENUM-IRON PROTEIN ALPHA CHAIN"/>
    <property type="match status" value="1"/>
</dbReference>
<dbReference type="PANTHER" id="PTHR43457:SF1">
    <property type="entry name" value="NITROGENASE MOLYBDENUM-IRON PROTEIN ALPHA CHAIN"/>
    <property type="match status" value="1"/>
</dbReference>
<dbReference type="Pfam" id="PF00148">
    <property type="entry name" value="Oxidored_nitro"/>
    <property type="match status" value="1"/>
</dbReference>
<dbReference type="SUPFAM" id="SSF53807">
    <property type="entry name" value="Helical backbone' metal receptor"/>
    <property type="match status" value="1"/>
</dbReference>
<dbReference type="PROSITE" id="PS00699">
    <property type="entry name" value="NITROGENASE_1_1"/>
    <property type="match status" value="1"/>
</dbReference>
<dbReference type="PROSITE" id="PS00090">
    <property type="entry name" value="NITROGENASE_1_2"/>
    <property type="match status" value="1"/>
</dbReference>
<accession>Q44045</accession>
<reference key="1">
    <citation type="submission" date="1996-02" db="EMBL/GenBank/DDBJ databases">
        <authorList>
            <person name="Zhang H."/>
            <person name="Zhu Y."/>
            <person name="Lin M."/>
            <person name="You C."/>
        </authorList>
    </citation>
    <scope>NUCLEOTIDE SEQUENCE [GENOMIC DNA]</scope>
</reference>
<sequence>MSREEVESLIQEVLEVYPEKARKDRAKHLSPNDPALEQSKKCITSNKKSQPGLMTIRGCAYAGSKGVVWGPIKDMIHISHGPVGCGQSSRAGRGNYYIGTTGVNAFVTMNFTSDFQEKDIVFGGDKKLAKLIDEIETLFPLKKGISVQSECPIGLIGDDIEAVAKKKAAEHETTVVPVRCEGFRGVSQSLGHHIANDAIRDWVLDKRDDDTSFETTPYDVSIIGDYNIGGDAWSSRILLEEMGLRVVATWSGDGTISQMELTPKVKLNLVHCYRSMNYISRHMEEKYGIPLMEYNFFGPTKTAESLRAIAEHFDDSIKAKCEQVIAKYQSEWEAVIAKYRPSLEGKRVMLYVGGLLPRHVIGAYKDLGIELVGTGYGFGHNDDYDRTLKEMGNATLLYDDVTGYEFEEFVKRINPDLIGSGIKEKYIFQKMGIPFRQMHSWDYSGPYHGFDVAIFARNMDMTLNNPCWKKLQAPWEKAEESAEKVAASA</sequence>
<gene>
    <name type="primary">nifD</name>
</gene>
<comment type="function">
    <text>This molybdenum-iron protein is part of the nitrogenase complex that catalyzes the key enzymatic reactions in nitrogen fixation.</text>
</comment>
<comment type="catalytic activity">
    <reaction>
        <text>N2 + 8 reduced [2Fe-2S]-[ferredoxin] + 16 ATP + 16 H2O = H2 + 8 oxidized [2Fe-2S]-[ferredoxin] + 2 NH4(+) + 16 ADP + 16 phosphate + 6 H(+)</text>
        <dbReference type="Rhea" id="RHEA:21448"/>
        <dbReference type="Rhea" id="RHEA-COMP:10000"/>
        <dbReference type="Rhea" id="RHEA-COMP:10001"/>
        <dbReference type="ChEBI" id="CHEBI:15377"/>
        <dbReference type="ChEBI" id="CHEBI:15378"/>
        <dbReference type="ChEBI" id="CHEBI:17997"/>
        <dbReference type="ChEBI" id="CHEBI:18276"/>
        <dbReference type="ChEBI" id="CHEBI:28938"/>
        <dbReference type="ChEBI" id="CHEBI:30616"/>
        <dbReference type="ChEBI" id="CHEBI:33737"/>
        <dbReference type="ChEBI" id="CHEBI:33738"/>
        <dbReference type="ChEBI" id="CHEBI:43474"/>
        <dbReference type="ChEBI" id="CHEBI:456216"/>
        <dbReference type="EC" id="1.18.6.1"/>
    </reaction>
</comment>
<comment type="cofactor">
    <cofactor evidence="1">
        <name>[8Fe-7S] cluster</name>
        <dbReference type="ChEBI" id="CHEBI:21143"/>
    </cofactor>
    <text evidence="1">Binds 1 [8Fe-7S] cluster per heterodimer.</text>
</comment>
<comment type="cofactor">
    <cofactor evidence="1">
        <name>[7Fe-Mo-9S-C-homocitryl] cluster</name>
        <dbReference type="ChEBI" id="CHEBI:30409"/>
    </cofactor>
    <text evidence="1">Binds 1 [7Fe-Mo-9S-C-homocitryl] cluster per subunit.</text>
</comment>
<comment type="subunit">
    <text>Tetramer of two alpha and two beta chains. Forms complex with the iron protein (nitrogenase component 2).</text>
</comment>
<comment type="similarity">
    <text evidence="3">Belongs to the NifD/NifK/NifE/NifN family.</text>
</comment>
<protein>
    <recommendedName>
        <fullName>Nitrogenase molybdenum-iron protein alpha chain</fullName>
        <ecNumber>1.18.6.1</ecNumber>
    </recommendedName>
    <alternativeName>
        <fullName>Dinitrogenase</fullName>
    </alternativeName>
    <alternativeName>
        <fullName>Nitrogenase component I</fullName>
    </alternativeName>
</protein>
<name>NIFD_ALCFA</name>
<keyword id="KW-0067">ATP-binding</keyword>
<keyword id="KW-0408">Iron</keyword>
<keyword id="KW-0411">Iron-sulfur</keyword>
<keyword id="KW-0479">Metal-binding</keyword>
<keyword id="KW-0500">Molybdenum</keyword>
<keyword id="KW-0535">Nitrogen fixation</keyword>
<keyword id="KW-0547">Nucleotide-binding</keyword>
<keyword id="KW-0560">Oxidoreductase</keyword>
<evidence type="ECO:0000250" key="1"/>
<evidence type="ECO:0000256" key="2">
    <source>
        <dbReference type="SAM" id="MobiDB-lite"/>
    </source>
</evidence>
<evidence type="ECO:0000305" key="3"/>
<proteinExistence type="inferred from homology"/>